<protein>
    <recommendedName>
        <fullName evidence="1">Large ribosomal subunit protein uL24</fullName>
    </recommendedName>
    <alternativeName>
        <fullName evidence="2">50S ribosomal protein L24</fullName>
    </alternativeName>
</protein>
<accession>A3M973</accession>
<proteinExistence type="inferred from homology"/>
<sequence>MAKIKKGDQVIVIAGKEKGKQGTVLSVSEDRVKVEGLNLVKKHQKPNRVTGAEGGIVTQEASLHISNVAILNATTQKADRVGYQVIDGVKTRVYKSTGESVAVAK</sequence>
<feature type="chain" id="PRO_1000141951" description="Large ribosomal subunit protein uL24">
    <location>
        <begin position="1"/>
        <end position="105"/>
    </location>
</feature>
<name>RL24_ACIBT</name>
<reference key="1">
    <citation type="journal article" date="2007" name="Genes Dev.">
        <title>New insights into Acinetobacter baumannii pathogenesis revealed by high-density pyrosequencing and transposon mutagenesis.</title>
        <authorList>
            <person name="Smith M.G."/>
            <person name="Gianoulis T.A."/>
            <person name="Pukatzki S."/>
            <person name="Mekalanos J.J."/>
            <person name="Ornston L.N."/>
            <person name="Gerstein M."/>
            <person name="Snyder M."/>
        </authorList>
    </citation>
    <scope>NUCLEOTIDE SEQUENCE [LARGE SCALE GENOMIC DNA]</scope>
    <source>
        <strain>ATCC 17978 / DSM 105126 / CIP 53.77 / LMG 1025 / NCDC KC755 / 5377</strain>
    </source>
</reference>
<gene>
    <name evidence="1" type="primary">rplX</name>
    <name type="ordered locus">A1S_3070</name>
</gene>
<dbReference type="EMBL" id="CP000521">
    <property type="protein sequence ID" value="ABO13467.2"/>
    <property type="molecule type" value="Genomic_DNA"/>
</dbReference>
<dbReference type="RefSeq" id="WP_001062685.1">
    <property type="nucleotide sequence ID" value="NZ_CP053098.1"/>
</dbReference>
<dbReference type="SMR" id="A3M973"/>
<dbReference type="GeneID" id="92895306"/>
<dbReference type="KEGG" id="acb:A1S_3070"/>
<dbReference type="HOGENOM" id="CLU_093315_2_2_6"/>
<dbReference type="GO" id="GO:1990904">
    <property type="term" value="C:ribonucleoprotein complex"/>
    <property type="evidence" value="ECO:0007669"/>
    <property type="project" value="UniProtKB-KW"/>
</dbReference>
<dbReference type="GO" id="GO:0005840">
    <property type="term" value="C:ribosome"/>
    <property type="evidence" value="ECO:0007669"/>
    <property type="project" value="UniProtKB-KW"/>
</dbReference>
<dbReference type="GO" id="GO:0019843">
    <property type="term" value="F:rRNA binding"/>
    <property type="evidence" value="ECO:0007669"/>
    <property type="project" value="UniProtKB-UniRule"/>
</dbReference>
<dbReference type="GO" id="GO:0003735">
    <property type="term" value="F:structural constituent of ribosome"/>
    <property type="evidence" value="ECO:0007669"/>
    <property type="project" value="InterPro"/>
</dbReference>
<dbReference type="GO" id="GO:0006412">
    <property type="term" value="P:translation"/>
    <property type="evidence" value="ECO:0007669"/>
    <property type="project" value="UniProtKB-UniRule"/>
</dbReference>
<dbReference type="CDD" id="cd06089">
    <property type="entry name" value="KOW_RPL26"/>
    <property type="match status" value="1"/>
</dbReference>
<dbReference type="FunFam" id="2.30.30.30:FF:000004">
    <property type="entry name" value="50S ribosomal protein L24"/>
    <property type="match status" value="1"/>
</dbReference>
<dbReference type="Gene3D" id="2.30.30.30">
    <property type="match status" value="1"/>
</dbReference>
<dbReference type="HAMAP" id="MF_01326_B">
    <property type="entry name" value="Ribosomal_uL24_B"/>
    <property type="match status" value="1"/>
</dbReference>
<dbReference type="InterPro" id="IPR005824">
    <property type="entry name" value="KOW"/>
</dbReference>
<dbReference type="InterPro" id="IPR014722">
    <property type="entry name" value="Rib_uL2_dom2"/>
</dbReference>
<dbReference type="InterPro" id="IPR003256">
    <property type="entry name" value="Ribosomal_uL24"/>
</dbReference>
<dbReference type="InterPro" id="IPR005825">
    <property type="entry name" value="Ribosomal_uL24_CS"/>
</dbReference>
<dbReference type="InterPro" id="IPR041988">
    <property type="entry name" value="Ribosomal_uL24_KOW"/>
</dbReference>
<dbReference type="InterPro" id="IPR008991">
    <property type="entry name" value="Translation_prot_SH3-like_sf"/>
</dbReference>
<dbReference type="NCBIfam" id="TIGR01079">
    <property type="entry name" value="rplX_bact"/>
    <property type="match status" value="1"/>
</dbReference>
<dbReference type="PANTHER" id="PTHR12903">
    <property type="entry name" value="MITOCHONDRIAL RIBOSOMAL PROTEIN L24"/>
    <property type="match status" value="1"/>
</dbReference>
<dbReference type="Pfam" id="PF00467">
    <property type="entry name" value="KOW"/>
    <property type="match status" value="1"/>
</dbReference>
<dbReference type="Pfam" id="PF17136">
    <property type="entry name" value="ribosomal_L24"/>
    <property type="match status" value="1"/>
</dbReference>
<dbReference type="SMART" id="SM00739">
    <property type="entry name" value="KOW"/>
    <property type="match status" value="1"/>
</dbReference>
<dbReference type="SUPFAM" id="SSF50104">
    <property type="entry name" value="Translation proteins SH3-like domain"/>
    <property type="match status" value="1"/>
</dbReference>
<dbReference type="PROSITE" id="PS01108">
    <property type="entry name" value="RIBOSOMAL_L24"/>
    <property type="match status" value="1"/>
</dbReference>
<keyword id="KW-0687">Ribonucleoprotein</keyword>
<keyword id="KW-0689">Ribosomal protein</keyword>
<keyword id="KW-0694">RNA-binding</keyword>
<keyword id="KW-0699">rRNA-binding</keyword>
<evidence type="ECO:0000255" key="1">
    <source>
        <dbReference type="HAMAP-Rule" id="MF_01326"/>
    </source>
</evidence>
<evidence type="ECO:0000305" key="2"/>
<organism>
    <name type="scientific">Acinetobacter baumannii (strain ATCC 17978 / DSM 105126 / CIP 53.77 / LMG 1025 / NCDC KC755 / 5377)</name>
    <dbReference type="NCBI Taxonomy" id="400667"/>
    <lineage>
        <taxon>Bacteria</taxon>
        <taxon>Pseudomonadati</taxon>
        <taxon>Pseudomonadota</taxon>
        <taxon>Gammaproteobacteria</taxon>
        <taxon>Moraxellales</taxon>
        <taxon>Moraxellaceae</taxon>
        <taxon>Acinetobacter</taxon>
        <taxon>Acinetobacter calcoaceticus/baumannii complex</taxon>
    </lineage>
</organism>
<comment type="function">
    <text evidence="1">One of two assembly initiator proteins, it binds directly to the 5'-end of the 23S rRNA, where it nucleates assembly of the 50S subunit.</text>
</comment>
<comment type="function">
    <text evidence="1">One of the proteins that surrounds the polypeptide exit tunnel on the outside of the subunit.</text>
</comment>
<comment type="subunit">
    <text evidence="1">Part of the 50S ribosomal subunit.</text>
</comment>
<comment type="similarity">
    <text evidence="1">Belongs to the universal ribosomal protein uL24 family.</text>
</comment>